<organism>
    <name type="scientific">Ranoidea genimaculata</name>
    <name type="common">Brown-spotted tree frog</name>
    <name type="synonym">Litoria genimaculata</name>
    <dbReference type="NCBI Taxonomy" id="95132"/>
    <lineage>
        <taxon>Eukaryota</taxon>
        <taxon>Metazoa</taxon>
        <taxon>Chordata</taxon>
        <taxon>Craniata</taxon>
        <taxon>Vertebrata</taxon>
        <taxon>Euteleostomi</taxon>
        <taxon>Amphibia</taxon>
        <taxon>Batrachia</taxon>
        <taxon>Anura</taxon>
        <taxon>Neobatrachia</taxon>
        <taxon>Hyloidea</taxon>
        <taxon>Hylidae</taxon>
        <taxon>Pelodryadinae</taxon>
        <taxon>Ranoidea</taxon>
    </lineage>
</organism>
<keyword id="KW-0027">Amidation</keyword>
<keyword id="KW-0878">Amphibian defense peptide</keyword>
<keyword id="KW-0044">Antibiotic</keyword>
<keyword id="KW-0929">Antimicrobial</keyword>
<keyword id="KW-0903">Direct protein sequencing</keyword>
<keyword id="KW-0964">Secreted</keyword>
<evidence type="ECO:0000269" key="1">
    <source>
    </source>
</evidence>
<accession>P82069</accession>
<reference key="1">
    <citation type="journal article" date="1998" name="J. Pept. Sci.">
        <title>The maculatin peptides from the skin glands of the tree frog Litoria genimaculata. A comparison of the structures and antibacterial activities of maculatin 1.1 and caerin 1.1.</title>
        <authorList>
            <person name="Rozek T."/>
            <person name="Waugh R.J."/>
            <person name="Steinborner S.T."/>
            <person name="Bowie J.H."/>
            <person name="Tyler M.J."/>
            <person name="Wallace J.C."/>
        </authorList>
    </citation>
    <scope>PROTEIN SEQUENCE</scope>
    <scope>AMIDATION AT ALA-26</scope>
    <scope>MASS SPECTROMETRY</scope>
</reference>
<protein>
    <recommendedName>
        <fullName>Maculatin-3.1</fullName>
    </recommendedName>
</protein>
<dbReference type="GO" id="GO:0005576">
    <property type="term" value="C:extracellular region"/>
    <property type="evidence" value="ECO:0007669"/>
    <property type="project" value="UniProtKB-SubCell"/>
</dbReference>
<dbReference type="GO" id="GO:0042742">
    <property type="term" value="P:defense response to bacterium"/>
    <property type="evidence" value="ECO:0007669"/>
    <property type="project" value="UniProtKB-KW"/>
</dbReference>
<name>MCU31_RANGE</name>
<feature type="peptide" id="PRO_0000043813" description="Maculatin-3.1">
    <location>
        <begin position="1"/>
        <end position="26"/>
    </location>
</feature>
<feature type="modified residue" description="Alanine amide" evidence="1">
    <location>
        <position position="26"/>
    </location>
</feature>
<sequence>GLLQTIKEKLESLESLAKGIVSGIQA</sequence>
<proteinExistence type="evidence at protein level"/>
<comment type="function">
    <text>Shows antibacterial activity against S.uberis.</text>
</comment>
<comment type="subcellular location">
    <subcellularLocation>
        <location>Secreted</location>
    </subcellularLocation>
</comment>
<comment type="tissue specificity">
    <text>Expressed by the skin dorsal glands.</text>
</comment>
<comment type="mass spectrometry"/>